<keyword id="KW-0997">Cell inner membrane</keyword>
<keyword id="KW-1003">Cell membrane</keyword>
<keyword id="KW-0472">Membrane</keyword>
<keyword id="KW-0808">Transferase</keyword>
<keyword id="KW-0812">Transmembrane</keyword>
<keyword id="KW-1133">Transmembrane helix</keyword>
<dbReference type="EC" id="2.5.1.145" evidence="1"/>
<dbReference type="EMBL" id="CP000708">
    <property type="protein sequence ID" value="ABQ61699.1"/>
    <property type="molecule type" value="Genomic_DNA"/>
</dbReference>
<dbReference type="RefSeq" id="WP_002966912.1">
    <property type="nucleotide sequence ID" value="NC_009505.1"/>
</dbReference>
<dbReference type="SMR" id="A5VRQ8"/>
<dbReference type="GeneID" id="97533286"/>
<dbReference type="KEGG" id="bov:BOV_1477"/>
<dbReference type="HOGENOM" id="CLU_013386_1_0_5"/>
<dbReference type="PhylomeDB" id="A5VRQ8"/>
<dbReference type="UniPathway" id="UPA00664"/>
<dbReference type="Proteomes" id="UP000006383">
    <property type="component" value="Chromosome I"/>
</dbReference>
<dbReference type="GO" id="GO:0005886">
    <property type="term" value="C:plasma membrane"/>
    <property type="evidence" value="ECO:0007669"/>
    <property type="project" value="UniProtKB-SubCell"/>
</dbReference>
<dbReference type="GO" id="GO:0008961">
    <property type="term" value="F:phosphatidylglycerol-prolipoprotein diacylglyceryl transferase activity"/>
    <property type="evidence" value="ECO:0007669"/>
    <property type="project" value="UniProtKB-UniRule"/>
</dbReference>
<dbReference type="GO" id="GO:0042158">
    <property type="term" value="P:lipoprotein biosynthetic process"/>
    <property type="evidence" value="ECO:0007669"/>
    <property type="project" value="UniProtKB-UniRule"/>
</dbReference>
<dbReference type="HAMAP" id="MF_01147">
    <property type="entry name" value="Lgt"/>
    <property type="match status" value="1"/>
</dbReference>
<dbReference type="InterPro" id="IPR001640">
    <property type="entry name" value="Lgt"/>
</dbReference>
<dbReference type="NCBIfam" id="TIGR00544">
    <property type="entry name" value="lgt"/>
    <property type="match status" value="1"/>
</dbReference>
<dbReference type="PANTHER" id="PTHR30589:SF0">
    <property type="entry name" value="PHOSPHATIDYLGLYCEROL--PROLIPOPROTEIN DIACYLGLYCERYL TRANSFERASE"/>
    <property type="match status" value="1"/>
</dbReference>
<dbReference type="PANTHER" id="PTHR30589">
    <property type="entry name" value="PROLIPOPROTEIN DIACYLGLYCERYL TRANSFERASE"/>
    <property type="match status" value="1"/>
</dbReference>
<dbReference type="Pfam" id="PF01790">
    <property type="entry name" value="LGT"/>
    <property type="match status" value="1"/>
</dbReference>
<proteinExistence type="inferred from homology"/>
<accession>A5VRQ8</accession>
<gene>
    <name evidence="1" type="primary">lgt</name>
    <name type="ordered locus">BOV_1477</name>
</gene>
<evidence type="ECO:0000255" key="1">
    <source>
        <dbReference type="HAMAP-Rule" id="MF_01147"/>
    </source>
</evidence>
<feature type="chain" id="PRO_1000053395" description="Phosphatidylglycerol--prolipoprotein diacylglyceryl transferase">
    <location>
        <begin position="1"/>
        <end position="281"/>
    </location>
</feature>
<feature type="transmembrane region" description="Helical" evidence="1">
    <location>
        <begin position="23"/>
        <end position="43"/>
    </location>
</feature>
<feature type="transmembrane region" description="Helical" evidence="1">
    <location>
        <begin position="71"/>
        <end position="91"/>
    </location>
</feature>
<feature type="transmembrane region" description="Helical" evidence="1">
    <location>
        <begin position="107"/>
        <end position="127"/>
    </location>
</feature>
<feature type="transmembrane region" description="Helical" evidence="1">
    <location>
        <begin position="133"/>
        <end position="153"/>
    </location>
</feature>
<feature type="transmembrane region" description="Helical" evidence="1">
    <location>
        <begin position="189"/>
        <end position="209"/>
    </location>
</feature>
<feature type="transmembrane region" description="Helical" evidence="1">
    <location>
        <begin position="217"/>
        <end position="237"/>
    </location>
</feature>
<feature type="transmembrane region" description="Helical" evidence="1">
    <location>
        <begin position="247"/>
        <end position="267"/>
    </location>
</feature>
<feature type="binding site" evidence="1">
    <location>
        <position position="154"/>
    </location>
    <ligand>
        <name>a 1,2-diacyl-sn-glycero-3-phospho-(1'-sn-glycerol)</name>
        <dbReference type="ChEBI" id="CHEBI:64716"/>
    </ligand>
</feature>
<protein>
    <recommendedName>
        <fullName evidence="1">Phosphatidylglycerol--prolipoprotein diacylglyceryl transferase</fullName>
        <ecNumber evidence="1">2.5.1.145</ecNumber>
    </recommendedName>
</protein>
<reference key="1">
    <citation type="journal article" date="2009" name="PLoS ONE">
        <title>Genome degradation in Brucella ovis corresponds with narrowing of its host range and tissue tropism.</title>
        <authorList>
            <person name="Tsolis R.M."/>
            <person name="Seshadri R."/>
            <person name="Santos R.L."/>
            <person name="Sangari F.J."/>
            <person name="Lobo J.M."/>
            <person name="de Jong M.F."/>
            <person name="Ren Q."/>
            <person name="Myers G."/>
            <person name="Brinkac L.M."/>
            <person name="Nelson W.C."/>
            <person name="Deboy R.T."/>
            <person name="Angiuoli S."/>
            <person name="Khouri H."/>
            <person name="Dimitrov G."/>
            <person name="Robinson J.R."/>
            <person name="Mulligan S."/>
            <person name="Walker R.L."/>
            <person name="Elzer P.E."/>
            <person name="Hassan K.A."/>
            <person name="Paulsen I.T."/>
        </authorList>
    </citation>
    <scope>NUCLEOTIDE SEQUENCE [LARGE SCALE GENOMIC DNA]</scope>
    <source>
        <strain>ATCC 25840 / 63/290 / NCTC 10512</strain>
    </source>
</reference>
<sequence length="281" mass="31001">MIETLLPASALAFPAIDPVIFRVGPLAVHWYGLGYVVGILFAWWYGKKLLRSHRLWANNQPPMAPEALDDFVIWAALGVVLGGRIGYVLFYNFSYYISNPLAIPALWDGGMSFHGGILGTTLAMILFARSRGILVWSMFDTIAAGVPIGLGVVRVANFINSELWGRVSDVPWAVYFPNGGPLPRHPSQLYEAFLEGLVLFFVLFVLVWGARKLKQPGFVAGAFVTGYGLSRIAVEFFREPDAQIGYLFGGWLTMGMVLSVPMVLLGLWAMWRANRAAARNA</sequence>
<comment type="function">
    <text evidence="1">Catalyzes the transfer of the diacylglyceryl group from phosphatidylglycerol to the sulfhydryl group of the N-terminal cysteine of a prolipoprotein, the first step in the formation of mature lipoproteins.</text>
</comment>
<comment type="catalytic activity">
    <reaction evidence="1">
        <text>L-cysteinyl-[prolipoprotein] + a 1,2-diacyl-sn-glycero-3-phospho-(1'-sn-glycerol) = an S-1,2-diacyl-sn-glyceryl-L-cysteinyl-[prolipoprotein] + sn-glycerol 1-phosphate + H(+)</text>
        <dbReference type="Rhea" id="RHEA:56712"/>
        <dbReference type="Rhea" id="RHEA-COMP:14679"/>
        <dbReference type="Rhea" id="RHEA-COMP:14680"/>
        <dbReference type="ChEBI" id="CHEBI:15378"/>
        <dbReference type="ChEBI" id="CHEBI:29950"/>
        <dbReference type="ChEBI" id="CHEBI:57685"/>
        <dbReference type="ChEBI" id="CHEBI:64716"/>
        <dbReference type="ChEBI" id="CHEBI:140658"/>
        <dbReference type="EC" id="2.5.1.145"/>
    </reaction>
</comment>
<comment type="pathway">
    <text evidence="1">Protein modification; lipoprotein biosynthesis (diacylglyceryl transfer).</text>
</comment>
<comment type="subcellular location">
    <subcellularLocation>
        <location evidence="1">Cell inner membrane</location>
        <topology evidence="1">Multi-pass membrane protein</topology>
    </subcellularLocation>
</comment>
<comment type="similarity">
    <text evidence="1">Belongs to the Lgt family.</text>
</comment>
<name>LGT_BRUO2</name>
<organism>
    <name type="scientific">Brucella ovis (strain ATCC 25840 / 63/290 / NCTC 10512)</name>
    <dbReference type="NCBI Taxonomy" id="444178"/>
    <lineage>
        <taxon>Bacteria</taxon>
        <taxon>Pseudomonadati</taxon>
        <taxon>Pseudomonadota</taxon>
        <taxon>Alphaproteobacteria</taxon>
        <taxon>Hyphomicrobiales</taxon>
        <taxon>Brucellaceae</taxon>
        <taxon>Brucella/Ochrobactrum group</taxon>
        <taxon>Brucella</taxon>
    </lineage>
</organism>